<evidence type="ECO:0000255" key="1">
    <source>
        <dbReference type="HAMAP-Rule" id="MF_00303"/>
    </source>
</evidence>
<dbReference type="EC" id="5.2.1.8" evidence="1"/>
<dbReference type="EMBL" id="CP000969">
    <property type="protein sequence ID" value="ACB08594.1"/>
    <property type="molecule type" value="Genomic_DNA"/>
</dbReference>
<dbReference type="RefSeq" id="WP_011942908.1">
    <property type="nucleotide sequence ID" value="NC_010483.1"/>
</dbReference>
<dbReference type="SMR" id="B1L813"/>
<dbReference type="KEGG" id="trq:TRQ2_0234"/>
<dbReference type="HOGENOM" id="CLU_033058_3_1_0"/>
<dbReference type="Proteomes" id="UP000001687">
    <property type="component" value="Chromosome"/>
</dbReference>
<dbReference type="GO" id="GO:0005737">
    <property type="term" value="C:cytoplasm"/>
    <property type="evidence" value="ECO:0007669"/>
    <property type="project" value="UniProtKB-SubCell"/>
</dbReference>
<dbReference type="GO" id="GO:0003677">
    <property type="term" value="F:DNA binding"/>
    <property type="evidence" value="ECO:0007669"/>
    <property type="project" value="InterPro"/>
</dbReference>
<dbReference type="GO" id="GO:0003755">
    <property type="term" value="F:peptidyl-prolyl cis-trans isomerase activity"/>
    <property type="evidence" value="ECO:0007669"/>
    <property type="project" value="UniProtKB-UniRule"/>
</dbReference>
<dbReference type="GO" id="GO:0051301">
    <property type="term" value="P:cell division"/>
    <property type="evidence" value="ECO:0007669"/>
    <property type="project" value="UniProtKB-KW"/>
</dbReference>
<dbReference type="GO" id="GO:0006457">
    <property type="term" value="P:protein folding"/>
    <property type="evidence" value="ECO:0007669"/>
    <property type="project" value="UniProtKB-UniRule"/>
</dbReference>
<dbReference type="GO" id="GO:0015031">
    <property type="term" value="P:protein transport"/>
    <property type="evidence" value="ECO:0007669"/>
    <property type="project" value="UniProtKB-UniRule"/>
</dbReference>
<dbReference type="GO" id="GO:0032784">
    <property type="term" value="P:regulation of DNA-templated transcription elongation"/>
    <property type="evidence" value="ECO:0007669"/>
    <property type="project" value="InterPro"/>
</dbReference>
<dbReference type="Gene3D" id="3.10.50.30">
    <property type="entry name" value="Transcription elongation factor, GreA/GreB, C-terminal domain"/>
    <property type="match status" value="1"/>
</dbReference>
<dbReference type="Gene3D" id="3.30.70.1050">
    <property type="entry name" value="Trigger factor ribosome-binding domain"/>
    <property type="match status" value="1"/>
</dbReference>
<dbReference type="Gene3D" id="1.10.3120.10">
    <property type="entry name" value="Trigger factor, C-terminal domain"/>
    <property type="match status" value="1"/>
</dbReference>
<dbReference type="HAMAP" id="MF_00303">
    <property type="entry name" value="Trigger_factor_Tig"/>
    <property type="match status" value="1"/>
</dbReference>
<dbReference type="InterPro" id="IPR036953">
    <property type="entry name" value="GreA/GreB_C_sf"/>
</dbReference>
<dbReference type="InterPro" id="IPR005215">
    <property type="entry name" value="Trig_fac"/>
</dbReference>
<dbReference type="InterPro" id="IPR008880">
    <property type="entry name" value="Trigger_fac_C"/>
</dbReference>
<dbReference type="InterPro" id="IPR037041">
    <property type="entry name" value="Trigger_fac_C_sf"/>
</dbReference>
<dbReference type="InterPro" id="IPR008881">
    <property type="entry name" value="Trigger_fac_ribosome-bd_bac"/>
</dbReference>
<dbReference type="InterPro" id="IPR036611">
    <property type="entry name" value="Trigger_fac_ribosome-bd_sf"/>
</dbReference>
<dbReference type="InterPro" id="IPR027304">
    <property type="entry name" value="Trigger_fact/SurA_dom_sf"/>
</dbReference>
<dbReference type="NCBIfam" id="TIGR00115">
    <property type="entry name" value="tig"/>
    <property type="match status" value="1"/>
</dbReference>
<dbReference type="Pfam" id="PF05698">
    <property type="entry name" value="Trigger_C"/>
    <property type="match status" value="1"/>
</dbReference>
<dbReference type="Pfam" id="PF05697">
    <property type="entry name" value="Trigger_N"/>
    <property type="match status" value="1"/>
</dbReference>
<dbReference type="PIRSF" id="PIRSF003095">
    <property type="entry name" value="Trigger_factor"/>
    <property type="match status" value="1"/>
</dbReference>
<dbReference type="SUPFAM" id="SSF54534">
    <property type="entry name" value="FKBP-like"/>
    <property type="match status" value="1"/>
</dbReference>
<dbReference type="SUPFAM" id="SSF109998">
    <property type="entry name" value="Triger factor/SurA peptide-binding domain-like"/>
    <property type="match status" value="1"/>
</dbReference>
<dbReference type="SUPFAM" id="SSF102735">
    <property type="entry name" value="Trigger factor ribosome-binding domain"/>
    <property type="match status" value="1"/>
</dbReference>
<proteinExistence type="inferred from homology"/>
<sequence>MEVKELERDKNRVVLEYVFGAEEIAQAEDKAVRYLNQRVEIPGFRKGRIPKNVLKMKLGEEFQEYTLDFLMDLIPDTLKDRKLILSPIVTERELKDVTARVVVEVHEEPEVRIGDISKIEVEKVDEEKVLEKYVERRIEDLRESHALLEPKEGPAEAGDLVRVNMEVYNEEEKKLTSREYEYVISEDEDRPFVKDLVGKKKGDVVEIEREYEGKKYTYKLEVEEVYKRTLPEIGDELAKSVNNEFETLEQLKESLKKEGKEIYDVEMKESMREQLLEKLPEIVEIEISDRTLEILVNEAINRLKREGRYEQIVSSYESEEKFREELKERILDDIKRDRVIEVLAQEKGISVNDEELEKEAEELAPFWGISPDRAKSLVKARQDLREELRWAILKRKVLDLLLQEVKVKVVEPKGEGDDSEGKEDN</sequence>
<reference key="1">
    <citation type="journal article" date="2011" name="J. Bacteriol.">
        <title>Genome sequence of Thermotoga sp. strain RQ2, a hyperthermophilic bacterium isolated from a geothermally heated region of the seafloor near Ribeira Quente, the Azores.</title>
        <authorList>
            <person name="Swithers K.S."/>
            <person name="DiPippo J.L."/>
            <person name="Bruce D.C."/>
            <person name="Detter C."/>
            <person name="Tapia R."/>
            <person name="Han S."/>
            <person name="Saunders E."/>
            <person name="Goodwin L.A."/>
            <person name="Han J."/>
            <person name="Woyke T."/>
            <person name="Pitluck S."/>
            <person name="Pennacchio L."/>
            <person name="Nolan M."/>
            <person name="Mikhailova N."/>
            <person name="Lykidis A."/>
            <person name="Land M.L."/>
            <person name="Brettin T."/>
            <person name="Stetter K.O."/>
            <person name="Nelson K.E."/>
            <person name="Gogarten J.P."/>
            <person name="Noll K.M."/>
        </authorList>
    </citation>
    <scope>NUCLEOTIDE SEQUENCE [LARGE SCALE GENOMIC DNA]</scope>
    <source>
        <strain>RQ2</strain>
    </source>
</reference>
<feature type="chain" id="PRO_1000115594" description="Trigger factor">
    <location>
        <begin position="1"/>
        <end position="425"/>
    </location>
</feature>
<feature type="domain" description="PPIase FKBP-type" evidence="1">
    <location>
        <begin position="158"/>
        <end position="231"/>
    </location>
</feature>
<name>TIG_THESQ</name>
<protein>
    <recommendedName>
        <fullName evidence="1">Trigger factor</fullName>
        <shortName evidence="1">TF</shortName>
        <ecNumber evidence="1">5.2.1.8</ecNumber>
    </recommendedName>
    <alternativeName>
        <fullName evidence="1">PPIase</fullName>
    </alternativeName>
</protein>
<keyword id="KW-0131">Cell cycle</keyword>
<keyword id="KW-0132">Cell division</keyword>
<keyword id="KW-0143">Chaperone</keyword>
<keyword id="KW-0963">Cytoplasm</keyword>
<keyword id="KW-0413">Isomerase</keyword>
<keyword id="KW-0697">Rotamase</keyword>
<comment type="function">
    <text evidence="1">Involved in protein export. Acts as a chaperone by maintaining the newly synthesized protein in an open conformation. Functions as a peptidyl-prolyl cis-trans isomerase.</text>
</comment>
<comment type="catalytic activity">
    <reaction evidence="1">
        <text>[protein]-peptidylproline (omega=180) = [protein]-peptidylproline (omega=0)</text>
        <dbReference type="Rhea" id="RHEA:16237"/>
        <dbReference type="Rhea" id="RHEA-COMP:10747"/>
        <dbReference type="Rhea" id="RHEA-COMP:10748"/>
        <dbReference type="ChEBI" id="CHEBI:83833"/>
        <dbReference type="ChEBI" id="CHEBI:83834"/>
        <dbReference type="EC" id="5.2.1.8"/>
    </reaction>
</comment>
<comment type="subcellular location">
    <subcellularLocation>
        <location>Cytoplasm</location>
    </subcellularLocation>
    <text evidence="1">About half TF is bound to the ribosome near the polypeptide exit tunnel while the other half is free in the cytoplasm.</text>
</comment>
<comment type="domain">
    <text evidence="1">Consists of 3 domains; the N-terminus binds the ribosome, the middle domain has PPIase activity, while the C-terminus has intrinsic chaperone activity on its own.</text>
</comment>
<comment type="similarity">
    <text evidence="1">Belongs to the FKBP-type PPIase family. Tig subfamily.</text>
</comment>
<organism>
    <name type="scientific">Thermotoga sp. (strain RQ2)</name>
    <dbReference type="NCBI Taxonomy" id="126740"/>
    <lineage>
        <taxon>Bacteria</taxon>
        <taxon>Thermotogati</taxon>
        <taxon>Thermotogota</taxon>
        <taxon>Thermotogae</taxon>
        <taxon>Thermotogales</taxon>
        <taxon>Thermotogaceae</taxon>
        <taxon>Thermotoga</taxon>
    </lineage>
</organism>
<gene>
    <name evidence="1" type="primary">tig</name>
    <name type="ordered locus">TRQ2_0234</name>
</gene>
<accession>B1L813</accession>